<name>MURE_BLOFL</name>
<sequence length="499" mass="56189">MFKLKQLHELIVPWISGINVKIPYLTGLELDSRNINFGNLFIAIQGYNTDGRLHIDDAINNGAVAILSESYNKSTFFIKKIVNNVEVIPIIYFNQLNKCISNIAGRFYDHPSLCLKLIGVTGTNGKTTITHLLTNWTSLLGERSAVMGTLGNGVLSDINPSCCTTCSAIETQKILKQFVQSGVTFVAMEISSHGLDQYRVDSLYFDVAIFSNISNDHLDYHNNINQYRMAKWRLFNELRVKNYVINVDDCVGYRWLLSLSNAVAVTIKNNLPRSWSGRWIALVKADYYLYGTKIVFKSSWGNGFIHSQLLGEVNVSNILLALGALLIMGYSLKSLLYTGSKLYPVCGRLEVLSCLNHPTVIVDYAHTPDALKKILIFAKHLCNKGRLWCIFGCGGNRDRSKRSLMGVIANRYSDYVIITNDNPRVEDPKLIIDDIICKIRNSEKLKIIEDRVYAINMVVSKACSDDFVLILGKGHEKYQNIGLNYISHSDQDIVKSIFK</sequence>
<reference key="1">
    <citation type="journal article" date="2003" name="Proc. Natl. Acad. Sci. U.S.A.">
        <title>The genome sequence of Blochmannia floridanus: comparative analysis of reduced genomes.</title>
        <authorList>
            <person name="Gil R."/>
            <person name="Silva F.J."/>
            <person name="Zientz E."/>
            <person name="Delmotte F."/>
            <person name="Gonzalez-Candelas F."/>
            <person name="Latorre A."/>
            <person name="Rausell C."/>
            <person name="Kamerbeek J."/>
            <person name="Gadau J."/>
            <person name="Hoelldobler B."/>
            <person name="van Ham R.C.H.J."/>
            <person name="Gross R."/>
            <person name="Moya A."/>
        </authorList>
    </citation>
    <scope>NUCLEOTIDE SEQUENCE [LARGE SCALE GENOMIC DNA]</scope>
</reference>
<gene>
    <name evidence="1" type="primary">murE</name>
    <name type="ordered locus">Bfl137</name>
</gene>
<evidence type="ECO:0000255" key="1">
    <source>
        <dbReference type="HAMAP-Rule" id="MF_00208"/>
    </source>
</evidence>
<organism>
    <name type="scientific">Blochmanniella floridana</name>
    <dbReference type="NCBI Taxonomy" id="203907"/>
    <lineage>
        <taxon>Bacteria</taxon>
        <taxon>Pseudomonadati</taxon>
        <taxon>Pseudomonadota</taxon>
        <taxon>Gammaproteobacteria</taxon>
        <taxon>Enterobacterales</taxon>
        <taxon>Enterobacteriaceae</taxon>
        <taxon>ant endosymbionts</taxon>
        <taxon>Candidatus Blochmanniella</taxon>
    </lineage>
</organism>
<keyword id="KW-0067">ATP-binding</keyword>
<keyword id="KW-0131">Cell cycle</keyword>
<keyword id="KW-0132">Cell division</keyword>
<keyword id="KW-0133">Cell shape</keyword>
<keyword id="KW-0961">Cell wall biogenesis/degradation</keyword>
<keyword id="KW-0963">Cytoplasm</keyword>
<keyword id="KW-0436">Ligase</keyword>
<keyword id="KW-0460">Magnesium</keyword>
<keyword id="KW-0547">Nucleotide-binding</keyword>
<keyword id="KW-0573">Peptidoglycan synthesis</keyword>
<keyword id="KW-1185">Reference proteome</keyword>
<dbReference type="EC" id="6.3.2.13" evidence="1"/>
<dbReference type="EMBL" id="BX248583">
    <property type="protein sequence ID" value="CAD83658.1"/>
    <property type="molecule type" value="Genomic_DNA"/>
</dbReference>
<dbReference type="SMR" id="Q7VQJ2"/>
<dbReference type="STRING" id="203907.Bfl137"/>
<dbReference type="KEGG" id="bfl:Bfl137"/>
<dbReference type="eggNOG" id="COG0769">
    <property type="taxonomic scope" value="Bacteria"/>
</dbReference>
<dbReference type="HOGENOM" id="CLU_022291_3_2_6"/>
<dbReference type="OrthoDB" id="9800958at2"/>
<dbReference type="UniPathway" id="UPA00219"/>
<dbReference type="Proteomes" id="UP000002192">
    <property type="component" value="Chromosome"/>
</dbReference>
<dbReference type="GO" id="GO:0005737">
    <property type="term" value="C:cytoplasm"/>
    <property type="evidence" value="ECO:0007669"/>
    <property type="project" value="UniProtKB-SubCell"/>
</dbReference>
<dbReference type="GO" id="GO:0005524">
    <property type="term" value="F:ATP binding"/>
    <property type="evidence" value="ECO:0007669"/>
    <property type="project" value="UniProtKB-UniRule"/>
</dbReference>
<dbReference type="GO" id="GO:0000287">
    <property type="term" value="F:magnesium ion binding"/>
    <property type="evidence" value="ECO:0007669"/>
    <property type="project" value="UniProtKB-UniRule"/>
</dbReference>
<dbReference type="GO" id="GO:0008765">
    <property type="term" value="F:UDP-N-acetylmuramoylalanyl-D-glutamate-2,6-diaminopimelate ligase activity"/>
    <property type="evidence" value="ECO:0007669"/>
    <property type="project" value="UniProtKB-UniRule"/>
</dbReference>
<dbReference type="GO" id="GO:0051301">
    <property type="term" value="P:cell division"/>
    <property type="evidence" value="ECO:0007669"/>
    <property type="project" value="UniProtKB-KW"/>
</dbReference>
<dbReference type="GO" id="GO:0071555">
    <property type="term" value="P:cell wall organization"/>
    <property type="evidence" value="ECO:0007669"/>
    <property type="project" value="UniProtKB-KW"/>
</dbReference>
<dbReference type="GO" id="GO:0009252">
    <property type="term" value="P:peptidoglycan biosynthetic process"/>
    <property type="evidence" value="ECO:0007669"/>
    <property type="project" value="UniProtKB-UniRule"/>
</dbReference>
<dbReference type="GO" id="GO:0008360">
    <property type="term" value="P:regulation of cell shape"/>
    <property type="evidence" value="ECO:0007669"/>
    <property type="project" value="UniProtKB-KW"/>
</dbReference>
<dbReference type="Gene3D" id="3.90.190.20">
    <property type="entry name" value="Mur ligase, C-terminal domain"/>
    <property type="match status" value="1"/>
</dbReference>
<dbReference type="Gene3D" id="3.40.1190.10">
    <property type="entry name" value="Mur-like, catalytic domain"/>
    <property type="match status" value="1"/>
</dbReference>
<dbReference type="Gene3D" id="3.40.1390.10">
    <property type="entry name" value="MurE/MurF, N-terminal domain"/>
    <property type="match status" value="1"/>
</dbReference>
<dbReference type="HAMAP" id="MF_00208">
    <property type="entry name" value="MurE"/>
    <property type="match status" value="1"/>
</dbReference>
<dbReference type="InterPro" id="IPR036565">
    <property type="entry name" value="Mur-like_cat_sf"/>
</dbReference>
<dbReference type="InterPro" id="IPR004101">
    <property type="entry name" value="Mur_ligase_C"/>
</dbReference>
<dbReference type="InterPro" id="IPR036615">
    <property type="entry name" value="Mur_ligase_C_dom_sf"/>
</dbReference>
<dbReference type="InterPro" id="IPR013221">
    <property type="entry name" value="Mur_ligase_cen"/>
</dbReference>
<dbReference type="InterPro" id="IPR000713">
    <property type="entry name" value="Mur_ligase_N"/>
</dbReference>
<dbReference type="InterPro" id="IPR035911">
    <property type="entry name" value="MurE/MurF_N"/>
</dbReference>
<dbReference type="InterPro" id="IPR005761">
    <property type="entry name" value="UDP-N-AcMur-Glu-dNH2Pim_ligase"/>
</dbReference>
<dbReference type="NCBIfam" id="TIGR01085">
    <property type="entry name" value="murE"/>
    <property type="match status" value="1"/>
</dbReference>
<dbReference type="NCBIfam" id="NF001123">
    <property type="entry name" value="PRK00139.1-1"/>
    <property type="match status" value="1"/>
</dbReference>
<dbReference type="NCBIfam" id="NF001126">
    <property type="entry name" value="PRK00139.1-4"/>
    <property type="match status" value="1"/>
</dbReference>
<dbReference type="PANTHER" id="PTHR23135">
    <property type="entry name" value="MUR LIGASE FAMILY MEMBER"/>
    <property type="match status" value="1"/>
</dbReference>
<dbReference type="PANTHER" id="PTHR23135:SF4">
    <property type="entry name" value="UDP-N-ACETYLMURAMOYL-L-ALANYL-D-GLUTAMATE--2,6-DIAMINOPIMELATE LIGASE MURE HOMOLOG, CHLOROPLASTIC"/>
    <property type="match status" value="1"/>
</dbReference>
<dbReference type="Pfam" id="PF01225">
    <property type="entry name" value="Mur_ligase"/>
    <property type="match status" value="1"/>
</dbReference>
<dbReference type="Pfam" id="PF02875">
    <property type="entry name" value="Mur_ligase_C"/>
    <property type="match status" value="1"/>
</dbReference>
<dbReference type="Pfam" id="PF08245">
    <property type="entry name" value="Mur_ligase_M"/>
    <property type="match status" value="1"/>
</dbReference>
<dbReference type="SUPFAM" id="SSF53623">
    <property type="entry name" value="MurD-like peptide ligases, catalytic domain"/>
    <property type="match status" value="1"/>
</dbReference>
<dbReference type="SUPFAM" id="SSF53244">
    <property type="entry name" value="MurD-like peptide ligases, peptide-binding domain"/>
    <property type="match status" value="1"/>
</dbReference>
<dbReference type="SUPFAM" id="SSF63418">
    <property type="entry name" value="MurE/MurF N-terminal domain"/>
    <property type="match status" value="1"/>
</dbReference>
<proteinExistence type="inferred from homology"/>
<comment type="function">
    <text evidence="1">Catalyzes the addition of meso-diaminopimelic acid to the nucleotide precursor UDP-N-acetylmuramoyl-L-alanyl-D-glutamate (UMAG) in the biosynthesis of bacterial cell-wall peptidoglycan.</text>
</comment>
<comment type="catalytic activity">
    <reaction evidence="1">
        <text>UDP-N-acetyl-alpha-D-muramoyl-L-alanyl-D-glutamate + meso-2,6-diaminopimelate + ATP = UDP-N-acetyl-alpha-D-muramoyl-L-alanyl-gamma-D-glutamyl-meso-2,6-diaminopimelate + ADP + phosphate + H(+)</text>
        <dbReference type="Rhea" id="RHEA:23676"/>
        <dbReference type="ChEBI" id="CHEBI:15378"/>
        <dbReference type="ChEBI" id="CHEBI:30616"/>
        <dbReference type="ChEBI" id="CHEBI:43474"/>
        <dbReference type="ChEBI" id="CHEBI:57791"/>
        <dbReference type="ChEBI" id="CHEBI:83900"/>
        <dbReference type="ChEBI" id="CHEBI:83905"/>
        <dbReference type="ChEBI" id="CHEBI:456216"/>
        <dbReference type="EC" id="6.3.2.13"/>
    </reaction>
</comment>
<comment type="cofactor">
    <cofactor evidence="1">
        <name>Mg(2+)</name>
        <dbReference type="ChEBI" id="CHEBI:18420"/>
    </cofactor>
</comment>
<comment type="pathway">
    <text evidence="1">Cell wall biogenesis; peptidoglycan biosynthesis.</text>
</comment>
<comment type="subcellular location">
    <subcellularLocation>
        <location evidence="1">Cytoplasm</location>
    </subcellularLocation>
</comment>
<comment type="PTM">
    <text evidence="1">Carboxylation is probably crucial for Mg(2+) binding and, consequently, for the gamma-phosphate positioning of ATP.</text>
</comment>
<comment type="similarity">
    <text evidence="1">Belongs to the MurCDEF family. MurE subfamily.</text>
</comment>
<feature type="chain" id="PRO_0000101877" description="UDP-N-acetylmuramoyl-L-alanyl-D-glutamate--2,6-diaminopimelate ligase">
    <location>
        <begin position="1"/>
        <end position="499"/>
    </location>
</feature>
<feature type="short sequence motif" description="Meso-diaminopimelate recognition motif">
    <location>
        <begin position="421"/>
        <end position="424"/>
    </location>
</feature>
<feature type="binding site" evidence="1">
    <location>
        <position position="30"/>
    </location>
    <ligand>
        <name>UDP-N-acetyl-alpha-D-muramoyl-L-alanyl-D-glutamate</name>
        <dbReference type="ChEBI" id="CHEBI:83900"/>
    </ligand>
</feature>
<feature type="binding site" evidence="1">
    <location>
        <position position="32"/>
    </location>
    <ligand>
        <name>UDP-N-acetyl-alpha-D-muramoyl-L-alanyl-D-glutamate</name>
        <dbReference type="ChEBI" id="CHEBI:83900"/>
    </ligand>
</feature>
<feature type="binding site" evidence="1">
    <location>
        <begin position="122"/>
        <end position="128"/>
    </location>
    <ligand>
        <name>ATP</name>
        <dbReference type="ChEBI" id="CHEBI:30616"/>
    </ligand>
</feature>
<feature type="binding site" evidence="1">
    <location>
        <begin position="164"/>
        <end position="165"/>
    </location>
    <ligand>
        <name>UDP-N-acetyl-alpha-D-muramoyl-L-alanyl-D-glutamate</name>
        <dbReference type="ChEBI" id="CHEBI:83900"/>
    </ligand>
</feature>
<feature type="binding site" evidence="1">
    <location>
        <position position="191"/>
    </location>
    <ligand>
        <name>UDP-N-acetyl-alpha-D-muramoyl-L-alanyl-D-glutamate</name>
        <dbReference type="ChEBI" id="CHEBI:83900"/>
    </ligand>
</feature>
<feature type="binding site" evidence="1">
    <location>
        <position position="197"/>
    </location>
    <ligand>
        <name>UDP-N-acetyl-alpha-D-muramoyl-L-alanyl-D-glutamate</name>
        <dbReference type="ChEBI" id="CHEBI:83900"/>
    </ligand>
</feature>
<feature type="binding site" evidence="1">
    <location>
        <position position="199"/>
    </location>
    <ligand>
        <name>UDP-N-acetyl-alpha-D-muramoyl-L-alanyl-D-glutamate</name>
        <dbReference type="ChEBI" id="CHEBI:83900"/>
    </ligand>
</feature>
<feature type="binding site" evidence="1">
    <location>
        <position position="397"/>
    </location>
    <ligand>
        <name>meso-2,6-diaminopimelate</name>
        <dbReference type="ChEBI" id="CHEBI:57791"/>
    </ligand>
</feature>
<feature type="binding site" evidence="1">
    <location>
        <begin position="421"/>
        <end position="424"/>
    </location>
    <ligand>
        <name>meso-2,6-diaminopimelate</name>
        <dbReference type="ChEBI" id="CHEBI:57791"/>
    </ligand>
</feature>
<feature type="binding site" evidence="1">
    <location>
        <position position="472"/>
    </location>
    <ligand>
        <name>meso-2,6-diaminopimelate</name>
        <dbReference type="ChEBI" id="CHEBI:57791"/>
    </ligand>
</feature>
<feature type="binding site" evidence="1">
    <location>
        <position position="476"/>
    </location>
    <ligand>
        <name>meso-2,6-diaminopimelate</name>
        <dbReference type="ChEBI" id="CHEBI:57791"/>
    </ligand>
</feature>
<feature type="modified residue" description="N6-carboxylysine" evidence="1">
    <location>
        <position position="231"/>
    </location>
</feature>
<protein>
    <recommendedName>
        <fullName evidence="1">UDP-N-acetylmuramoyl-L-alanyl-D-glutamate--2,6-diaminopimelate ligase</fullName>
        <ecNumber evidence="1">6.3.2.13</ecNumber>
    </recommendedName>
    <alternativeName>
        <fullName evidence="1">Meso-A2pm-adding enzyme</fullName>
    </alternativeName>
    <alternativeName>
        <fullName evidence="1">Meso-diaminopimelate-adding enzyme</fullName>
    </alternativeName>
    <alternativeName>
        <fullName evidence="1">UDP-MurNAc-L-Ala-D-Glu:meso-diaminopimelate ligase</fullName>
    </alternativeName>
    <alternativeName>
        <fullName evidence="1">UDP-MurNAc-tripeptide synthetase</fullName>
    </alternativeName>
    <alternativeName>
        <fullName evidence="1">UDP-N-acetylmuramyl-tripeptide synthetase</fullName>
    </alternativeName>
</protein>
<accession>Q7VQJ2</accession>